<sequence>MFADIAVQHWAFAIYVIAAICLCLVMIGLAALLGGRAHGRAKNTPFESGVDSVGNARLRFSAKFYLVAMFFVIFDVEALYLFAWSVSVRESGWVGFIEAAIFIGLLLVGLLYLWRIGALDSAPKKRALTDKKPD</sequence>
<accession>A4SLP4</accession>
<keyword id="KW-0997">Cell inner membrane</keyword>
<keyword id="KW-1003">Cell membrane</keyword>
<keyword id="KW-0472">Membrane</keyword>
<keyword id="KW-0520">NAD</keyword>
<keyword id="KW-0874">Quinone</keyword>
<keyword id="KW-1278">Translocase</keyword>
<keyword id="KW-0812">Transmembrane</keyword>
<keyword id="KW-1133">Transmembrane helix</keyword>
<keyword id="KW-0813">Transport</keyword>
<keyword id="KW-0830">Ubiquinone</keyword>
<dbReference type="EC" id="7.1.1.-" evidence="1"/>
<dbReference type="EMBL" id="CP000644">
    <property type="protein sequence ID" value="ABO89816.1"/>
    <property type="molecule type" value="Genomic_DNA"/>
</dbReference>
<dbReference type="RefSeq" id="WP_005314928.1">
    <property type="nucleotide sequence ID" value="NC_009348.1"/>
</dbReference>
<dbReference type="SMR" id="A4SLP4"/>
<dbReference type="STRING" id="29491.GCA_000820065_02206"/>
<dbReference type="KEGG" id="asa:ASA_1736"/>
<dbReference type="PATRIC" id="fig|382245.13.peg.1723"/>
<dbReference type="eggNOG" id="COG0838">
    <property type="taxonomic scope" value="Bacteria"/>
</dbReference>
<dbReference type="HOGENOM" id="CLU_119549_2_1_6"/>
<dbReference type="Proteomes" id="UP000000225">
    <property type="component" value="Chromosome"/>
</dbReference>
<dbReference type="GO" id="GO:0030964">
    <property type="term" value="C:NADH dehydrogenase complex"/>
    <property type="evidence" value="ECO:0007669"/>
    <property type="project" value="TreeGrafter"/>
</dbReference>
<dbReference type="GO" id="GO:0005886">
    <property type="term" value="C:plasma membrane"/>
    <property type="evidence" value="ECO:0007669"/>
    <property type="project" value="UniProtKB-SubCell"/>
</dbReference>
<dbReference type="GO" id="GO:0008137">
    <property type="term" value="F:NADH dehydrogenase (ubiquinone) activity"/>
    <property type="evidence" value="ECO:0007669"/>
    <property type="project" value="InterPro"/>
</dbReference>
<dbReference type="GO" id="GO:0050136">
    <property type="term" value="F:NADH:ubiquinone reductase (non-electrogenic) activity"/>
    <property type="evidence" value="ECO:0007669"/>
    <property type="project" value="UniProtKB-UniRule"/>
</dbReference>
<dbReference type="GO" id="GO:0048038">
    <property type="term" value="F:quinone binding"/>
    <property type="evidence" value="ECO:0007669"/>
    <property type="project" value="UniProtKB-KW"/>
</dbReference>
<dbReference type="FunFam" id="1.20.58.1610:FF:000003">
    <property type="entry name" value="NADH-quinone oxidoreductase subunit A"/>
    <property type="match status" value="1"/>
</dbReference>
<dbReference type="Gene3D" id="1.20.58.1610">
    <property type="entry name" value="NADH:ubiquinone/plastoquinone oxidoreductase, chain 3"/>
    <property type="match status" value="1"/>
</dbReference>
<dbReference type="HAMAP" id="MF_01394">
    <property type="entry name" value="NDH1_NuoA"/>
    <property type="match status" value="1"/>
</dbReference>
<dbReference type="InterPro" id="IPR023043">
    <property type="entry name" value="NAD(P)H_OxRDtase_bac/plastid"/>
</dbReference>
<dbReference type="InterPro" id="IPR000440">
    <property type="entry name" value="NADH_UbQ/plastoQ_OxRdtase_su3"/>
</dbReference>
<dbReference type="InterPro" id="IPR038430">
    <property type="entry name" value="NDAH_ubi_oxred_su3_sf"/>
</dbReference>
<dbReference type="PANTHER" id="PTHR11058:SF21">
    <property type="entry name" value="NADH-QUINONE OXIDOREDUCTASE SUBUNIT A"/>
    <property type="match status" value="1"/>
</dbReference>
<dbReference type="PANTHER" id="PTHR11058">
    <property type="entry name" value="NADH-UBIQUINONE OXIDOREDUCTASE CHAIN 3"/>
    <property type="match status" value="1"/>
</dbReference>
<dbReference type="Pfam" id="PF00507">
    <property type="entry name" value="Oxidored_q4"/>
    <property type="match status" value="1"/>
</dbReference>
<comment type="function">
    <text evidence="1">NDH-1 shuttles electrons from NADH, via FMN and iron-sulfur (Fe-S) centers, to quinones in the respiratory chain. The immediate electron acceptor for the enzyme in this species is believed to be ubiquinone. Couples the redox reaction to proton translocation (for every two electrons transferred, four hydrogen ions are translocated across the cytoplasmic membrane), and thus conserves the redox energy in a proton gradient.</text>
</comment>
<comment type="catalytic activity">
    <reaction evidence="1">
        <text>a quinone + NADH + 5 H(+)(in) = a quinol + NAD(+) + 4 H(+)(out)</text>
        <dbReference type="Rhea" id="RHEA:57888"/>
        <dbReference type="ChEBI" id="CHEBI:15378"/>
        <dbReference type="ChEBI" id="CHEBI:24646"/>
        <dbReference type="ChEBI" id="CHEBI:57540"/>
        <dbReference type="ChEBI" id="CHEBI:57945"/>
        <dbReference type="ChEBI" id="CHEBI:132124"/>
    </reaction>
</comment>
<comment type="subunit">
    <text evidence="1">NDH-1 is composed of 14 different subunits. Subunits NuoA, H, J, K, L, M, N constitute the membrane sector of the complex.</text>
</comment>
<comment type="subcellular location">
    <subcellularLocation>
        <location evidence="1">Cell inner membrane</location>
        <topology evidence="1">Multi-pass membrane protein</topology>
    </subcellularLocation>
</comment>
<comment type="similarity">
    <text evidence="1">Belongs to the complex I subunit 3 family.</text>
</comment>
<proteinExistence type="inferred from homology"/>
<organism>
    <name type="scientific">Aeromonas salmonicida (strain A449)</name>
    <dbReference type="NCBI Taxonomy" id="382245"/>
    <lineage>
        <taxon>Bacteria</taxon>
        <taxon>Pseudomonadati</taxon>
        <taxon>Pseudomonadota</taxon>
        <taxon>Gammaproteobacteria</taxon>
        <taxon>Aeromonadales</taxon>
        <taxon>Aeromonadaceae</taxon>
        <taxon>Aeromonas</taxon>
    </lineage>
</organism>
<protein>
    <recommendedName>
        <fullName evidence="1">NADH-quinone oxidoreductase subunit A</fullName>
        <ecNumber evidence="1">7.1.1.-</ecNumber>
    </recommendedName>
    <alternativeName>
        <fullName evidence="1">NADH dehydrogenase I subunit A</fullName>
    </alternativeName>
    <alternativeName>
        <fullName evidence="1">NDH-1 subunit A</fullName>
    </alternativeName>
    <alternativeName>
        <fullName evidence="1">NUO1</fullName>
    </alternativeName>
</protein>
<feature type="chain" id="PRO_0000362618" description="NADH-quinone oxidoreductase subunit A">
    <location>
        <begin position="1"/>
        <end position="134"/>
    </location>
</feature>
<feature type="transmembrane region" description="Helical" evidence="1">
    <location>
        <begin position="12"/>
        <end position="32"/>
    </location>
</feature>
<feature type="transmembrane region" description="Helical" evidence="1">
    <location>
        <begin position="64"/>
        <end position="84"/>
    </location>
</feature>
<feature type="transmembrane region" description="Helical" evidence="1">
    <location>
        <begin position="93"/>
        <end position="113"/>
    </location>
</feature>
<reference key="1">
    <citation type="journal article" date="2008" name="BMC Genomics">
        <title>The genome of Aeromonas salmonicida subsp. salmonicida A449: insights into the evolution of a fish pathogen.</title>
        <authorList>
            <person name="Reith M.E."/>
            <person name="Singh R.K."/>
            <person name="Curtis B."/>
            <person name="Boyd J.M."/>
            <person name="Bouevitch A."/>
            <person name="Kimball J."/>
            <person name="Munholland J."/>
            <person name="Murphy C."/>
            <person name="Sarty D."/>
            <person name="Williams J."/>
            <person name="Nash J.H."/>
            <person name="Johnson S.C."/>
            <person name="Brown L.L."/>
        </authorList>
    </citation>
    <scope>NUCLEOTIDE SEQUENCE [LARGE SCALE GENOMIC DNA]</scope>
    <source>
        <strain>A449</strain>
    </source>
</reference>
<evidence type="ECO:0000255" key="1">
    <source>
        <dbReference type="HAMAP-Rule" id="MF_01394"/>
    </source>
</evidence>
<name>NUOA_AERS4</name>
<gene>
    <name evidence="1" type="primary">nuoA</name>
    <name type="ordered locus">ASA_1736</name>
</gene>